<gene>
    <name evidence="1" type="primary">mnmC</name>
    <name type="ordered locus">Bphy_3066</name>
</gene>
<dbReference type="EC" id="2.1.1.61" evidence="1"/>
<dbReference type="EC" id="1.5.-.-" evidence="1"/>
<dbReference type="EMBL" id="CP001043">
    <property type="protein sequence ID" value="ACC72234.1"/>
    <property type="molecule type" value="Genomic_DNA"/>
</dbReference>
<dbReference type="RefSeq" id="WP_012402410.1">
    <property type="nucleotide sequence ID" value="NC_010622.1"/>
</dbReference>
<dbReference type="SMR" id="B2JJN6"/>
<dbReference type="STRING" id="391038.Bphy_3066"/>
<dbReference type="KEGG" id="bph:Bphy_3066"/>
<dbReference type="eggNOG" id="COG0665">
    <property type="taxonomic scope" value="Bacteria"/>
</dbReference>
<dbReference type="eggNOG" id="COG4121">
    <property type="taxonomic scope" value="Bacteria"/>
</dbReference>
<dbReference type="HOGENOM" id="CLU_022427_1_0_4"/>
<dbReference type="OrthoDB" id="9786494at2"/>
<dbReference type="Proteomes" id="UP000001192">
    <property type="component" value="Chromosome 1"/>
</dbReference>
<dbReference type="GO" id="GO:0005737">
    <property type="term" value="C:cytoplasm"/>
    <property type="evidence" value="ECO:0007669"/>
    <property type="project" value="UniProtKB-SubCell"/>
</dbReference>
<dbReference type="GO" id="GO:0050660">
    <property type="term" value="F:flavin adenine dinucleotide binding"/>
    <property type="evidence" value="ECO:0007669"/>
    <property type="project" value="UniProtKB-UniRule"/>
</dbReference>
<dbReference type="GO" id="GO:0016645">
    <property type="term" value="F:oxidoreductase activity, acting on the CH-NH group of donors"/>
    <property type="evidence" value="ECO:0007669"/>
    <property type="project" value="InterPro"/>
</dbReference>
<dbReference type="GO" id="GO:0004808">
    <property type="term" value="F:tRNA (5-methylaminomethyl-2-thiouridylate)(34)-methyltransferase activity"/>
    <property type="evidence" value="ECO:0007669"/>
    <property type="project" value="UniProtKB-EC"/>
</dbReference>
<dbReference type="GO" id="GO:0032259">
    <property type="term" value="P:methylation"/>
    <property type="evidence" value="ECO:0007669"/>
    <property type="project" value="UniProtKB-KW"/>
</dbReference>
<dbReference type="GO" id="GO:0002098">
    <property type="term" value="P:tRNA wobble uridine modification"/>
    <property type="evidence" value="ECO:0007669"/>
    <property type="project" value="TreeGrafter"/>
</dbReference>
<dbReference type="Gene3D" id="3.30.9.10">
    <property type="entry name" value="D-Amino Acid Oxidase, subunit A, domain 2"/>
    <property type="match status" value="1"/>
</dbReference>
<dbReference type="Gene3D" id="3.50.50.60">
    <property type="entry name" value="FAD/NAD(P)-binding domain"/>
    <property type="match status" value="1"/>
</dbReference>
<dbReference type="Gene3D" id="3.40.50.150">
    <property type="entry name" value="Vaccinia Virus protein VP39"/>
    <property type="match status" value="1"/>
</dbReference>
<dbReference type="HAMAP" id="MF_01102">
    <property type="entry name" value="MnmC"/>
    <property type="match status" value="1"/>
</dbReference>
<dbReference type="InterPro" id="IPR006076">
    <property type="entry name" value="FAD-dep_OxRdtase"/>
</dbReference>
<dbReference type="InterPro" id="IPR036188">
    <property type="entry name" value="FAD/NAD-bd_sf"/>
</dbReference>
<dbReference type="InterPro" id="IPR008471">
    <property type="entry name" value="MnmC-like_methylTransf"/>
</dbReference>
<dbReference type="InterPro" id="IPR029063">
    <property type="entry name" value="SAM-dependent_MTases_sf"/>
</dbReference>
<dbReference type="InterPro" id="IPR023032">
    <property type="entry name" value="tRNA_MAMT_biosynth_bifunc_MnmC"/>
</dbReference>
<dbReference type="InterPro" id="IPR047785">
    <property type="entry name" value="tRNA_MNMC2"/>
</dbReference>
<dbReference type="InterPro" id="IPR017610">
    <property type="entry name" value="tRNA_S-uridine_synth_MnmC_C"/>
</dbReference>
<dbReference type="NCBIfam" id="TIGR03197">
    <property type="entry name" value="MnmC_Cterm"/>
    <property type="match status" value="1"/>
</dbReference>
<dbReference type="NCBIfam" id="NF002481">
    <property type="entry name" value="PRK01747.1-2"/>
    <property type="match status" value="1"/>
</dbReference>
<dbReference type="NCBIfam" id="NF002483">
    <property type="entry name" value="PRK01747.1-4"/>
    <property type="match status" value="1"/>
</dbReference>
<dbReference type="NCBIfam" id="NF033855">
    <property type="entry name" value="tRNA_MNMC2"/>
    <property type="match status" value="1"/>
</dbReference>
<dbReference type="PANTHER" id="PTHR13847">
    <property type="entry name" value="SARCOSINE DEHYDROGENASE-RELATED"/>
    <property type="match status" value="1"/>
</dbReference>
<dbReference type="PANTHER" id="PTHR13847:SF283">
    <property type="entry name" value="TRNA 5-METHYLAMINOMETHYL-2-THIOURIDINE BIOSYNTHESIS BIFUNCTIONAL PROTEIN MNMC"/>
    <property type="match status" value="1"/>
</dbReference>
<dbReference type="Pfam" id="PF01266">
    <property type="entry name" value="DAO"/>
    <property type="match status" value="1"/>
</dbReference>
<dbReference type="Pfam" id="PF05430">
    <property type="entry name" value="Methyltransf_30"/>
    <property type="match status" value="1"/>
</dbReference>
<dbReference type="SUPFAM" id="SSF51905">
    <property type="entry name" value="FAD/NAD(P)-binding domain"/>
    <property type="match status" value="1"/>
</dbReference>
<evidence type="ECO:0000255" key="1">
    <source>
        <dbReference type="HAMAP-Rule" id="MF_01102"/>
    </source>
</evidence>
<sequence>MTDPLVPAVLAFRDNGTPYSPLYDDIYHSAVGGLAQADYVFLKGNDLPSRWQKRRLFTVLETGFGMGINFLVTWAAWRADPDRCERLHFVSTEKHPFSREDLIAATNSSVADASIAALAEQLANAWPTLVPGTHRLEFEEGRVILTLVFGDAVQTLPTLWLRADAFYLDGFSPDRNPDLWTPAVFKSLARLAGDEATFATYTSSGDVKRSLQQAGFEYRKVDGFGWKRAMLVGRFAPRYRVRRHEPPLPLAVGERHAIVIGTGLAGCAAIERLTARGWRVTSLERHADVARDASGNPAGVFHPMMSRDDSVGSRITRAGFLYALRQWSALEHRGHRPLRGPEGLLQIAADEEEALAMAHTFASFAWPREYVVSVTRDDAERIANMRVARGGWLFPHGGWIDPASLCAAQCEAAGGLLERRFNVAAARVERLENQWIVFDENGAAVVSAPVVIFANAHEAARVAGLHYASTRSVRGQLTLLPADATNAPRLPVIGEGYALPLLDGVTLTGATYDIDDPDTRLRDGAHIENIERVAQMLPDMRDAFNVHAPSSLTGRVAFRCVTSDRLPMIGAFADEAAAIRDAGKLCGAWPLDLPRADGLYGAFAFGSRGLVWASLGAELMASQIEGEPWPIERDLAEALDPARFLLRALRQGTAS</sequence>
<comment type="function">
    <text evidence="1">Catalyzes the last two steps in the biosynthesis of 5-methylaminomethyl-2-thiouridine (mnm(5)s(2)U) at the wobble position (U34) in tRNA. Catalyzes the FAD-dependent demodification of cmnm(5)s(2)U34 to nm(5)s(2)U34, followed by the transfer of a methyl group from S-adenosyl-L-methionine to nm(5)s(2)U34, to form mnm(5)s(2)U34.</text>
</comment>
<comment type="catalytic activity">
    <reaction evidence="1">
        <text>5-aminomethyl-2-thiouridine(34) in tRNA + S-adenosyl-L-methionine = 5-methylaminomethyl-2-thiouridine(34) in tRNA + S-adenosyl-L-homocysteine + H(+)</text>
        <dbReference type="Rhea" id="RHEA:19569"/>
        <dbReference type="Rhea" id="RHEA-COMP:10195"/>
        <dbReference type="Rhea" id="RHEA-COMP:10197"/>
        <dbReference type="ChEBI" id="CHEBI:15378"/>
        <dbReference type="ChEBI" id="CHEBI:57856"/>
        <dbReference type="ChEBI" id="CHEBI:59789"/>
        <dbReference type="ChEBI" id="CHEBI:74454"/>
        <dbReference type="ChEBI" id="CHEBI:74455"/>
        <dbReference type="EC" id="2.1.1.61"/>
    </reaction>
</comment>
<comment type="cofactor">
    <cofactor evidence="1">
        <name>FAD</name>
        <dbReference type="ChEBI" id="CHEBI:57692"/>
    </cofactor>
</comment>
<comment type="subcellular location">
    <subcellularLocation>
        <location evidence="1">Cytoplasm</location>
    </subcellularLocation>
</comment>
<comment type="similarity">
    <text evidence="1">In the N-terminal section; belongs to the methyltransferase superfamily. tRNA (mnm(5)s(2)U34)-methyltransferase family.</text>
</comment>
<comment type="similarity">
    <text evidence="1">In the C-terminal section; belongs to the DAO family.</text>
</comment>
<proteinExistence type="inferred from homology"/>
<feature type="chain" id="PRO_0000347957" description="tRNA 5-methylaminomethyl-2-thiouridine biosynthesis bifunctional protein MnmC">
    <location>
        <begin position="1"/>
        <end position="655"/>
    </location>
</feature>
<feature type="region of interest" description="tRNA (mnm(5)s(2)U34)-methyltransferase">
    <location>
        <begin position="1"/>
        <end position="236"/>
    </location>
</feature>
<feature type="region of interest" description="FAD-dependent cmnm(5)s(2)U34 oxidoreductase">
    <location>
        <begin position="260"/>
        <end position="655"/>
    </location>
</feature>
<keyword id="KW-0963">Cytoplasm</keyword>
<keyword id="KW-0274">FAD</keyword>
<keyword id="KW-0285">Flavoprotein</keyword>
<keyword id="KW-0489">Methyltransferase</keyword>
<keyword id="KW-0511">Multifunctional enzyme</keyword>
<keyword id="KW-0560">Oxidoreductase</keyword>
<keyword id="KW-1185">Reference proteome</keyword>
<keyword id="KW-0949">S-adenosyl-L-methionine</keyword>
<keyword id="KW-0808">Transferase</keyword>
<keyword id="KW-0819">tRNA processing</keyword>
<protein>
    <recommendedName>
        <fullName evidence="1">tRNA 5-methylaminomethyl-2-thiouridine biosynthesis bifunctional protein MnmC</fullName>
        <shortName evidence="1">tRNA mnm(5)s(2)U biosynthesis bifunctional protein</shortName>
    </recommendedName>
    <domain>
        <recommendedName>
            <fullName evidence="1">tRNA (mnm(5)s(2)U34)-methyltransferase</fullName>
            <ecNumber evidence="1">2.1.1.61</ecNumber>
        </recommendedName>
    </domain>
    <domain>
        <recommendedName>
            <fullName evidence="1">FAD-dependent cmnm(5)s(2)U34 oxidoreductase</fullName>
            <ecNumber evidence="1">1.5.-.-</ecNumber>
        </recommendedName>
    </domain>
</protein>
<reference key="1">
    <citation type="journal article" date="2014" name="Stand. Genomic Sci.">
        <title>Complete genome sequence of Burkholderia phymatum STM815(T), a broad host range and efficient nitrogen-fixing symbiont of Mimosa species.</title>
        <authorList>
            <person name="Moulin L."/>
            <person name="Klonowska A."/>
            <person name="Caroline B."/>
            <person name="Booth K."/>
            <person name="Vriezen J.A."/>
            <person name="Melkonian R."/>
            <person name="James E.K."/>
            <person name="Young J.P."/>
            <person name="Bena G."/>
            <person name="Hauser L."/>
            <person name="Land M."/>
            <person name="Kyrpides N."/>
            <person name="Bruce D."/>
            <person name="Chain P."/>
            <person name="Copeland A."/>
            <person name="Pitluck S."/>
            <person name="Woyke T."/>
            <person name="Lizotte-Waniewski M."/>
            <person name="Bristow J."/>
            <person name="Riley M."/>
        </authorList>
    </citation>
    <scope>NUCLEOTIDE SEQUENCE [LARGE SCALE GENOMIC DNA]</scope>
    <source>
        <strain>DSM 17167 / CIP 108236 / LMG 21445 / STM815</strain>
    </source>
</reference>
<name>MNMC_PARP8</name>
<accession>B2JJN6</accession>
<organism>
    <name type="scientific">Paraburkholderia phymatum (strain DSM 17167 / CIP 108236 / LMG 21445 / STM815)</name>
    <name type="common">Burkholderia phymatum</name>
    <dbReference type="NCBI Taxonomy" id="391038"/>
    <lineage>
        <taxon>Bacteria</taxon>
        <taxon>Pseudomonadati</taxon>
        <taxon>Pseudomonadota</taxon>
        <taxon>Betaproteobacteria</taxon>
        <taxon>Burkholderiales</taxon>
        <taxon>Burkholderiaceae</taxon>
        <taxon>Paraburkholderia</taxon>
    </lineage>
</organism>